<organism>
    <name type="scientific">Rickettsia bellii (strain RML369-C)</name>
    <dbReference type="NCBI Taxonomy" id="336407"/>
    <lineage>
        <taxon>Bacteria</taxon>
        <taxon>Pseudomonadati</taxon>
        <taxon>Pseudomonadota</taxon>
        <taxon>Alphaproteobacteria</taxon>
        <taxon>Rickettsiales</taxon>
        <taxon>Rickettsiaceae</taxon>
        <taxon>Rickettsieae</taxon>
        <taxon>Rickettsia</taxon>
        <taxon>belli group</taxon>
    </lineage>
</organism>
<keyword id="KW-0408">Iron</keyword>
<keyword id="KW-0479">Metal-binding</keyword>
<proteinExistence type="inferred from homology"/>
<accession>Q1RIC4</accession>
<sequence length="96" mass="10879">MNNSEFSKIAETVIAHIADRIEEQNQDIDVDLQSDILSIDTTDGIYVINKQSAAKEIWLSSPVSGPYHFFYEQGKWKNRAGLELMSILTDELGIDF</sequence>
<feature type="chain" id="PRO_0000277895" description="Iron-sulfur cluster assembly protein CyaY">
    <location>
        <begin position="1"/>
        <end position="96"/>
    </location>
</feature>
<protein>
    <recommendedName>
        <fullName evidence="1">Iron-sulfur cluster assembly protein CyaY</fullName>
    </recommendedName>
</protein>
<name>CYAY_RICBR</name>
<dbReference type="EMBL" id="CP000087">
    <property type="protein sequence ID" value="ABE04890.1"/>
    <property type="molecule type" value="Genomic_DNA"/>
</dbReference>
<dbReference type="RefSeq" id="WP_011477477.1">
    <property type="nucleotide sequence ID" value="NC_007940.1"/>
</dbReference>
<dbReference type="SMR" id="Q1RIC4"/>
<dbReference type="KEGG" id="rbe:RBE_0809"/>
<dbReference type="eggNOG" id="COG1965">
    <property type="taxonomic scope" value="Bacteria"/>
</dbReference>
<dbReference type="HOGENOM" id="CLU_080880_4_1_5"/>
<dbReference type="OrthoDB" id="8480400at2"/>
<dbReference type="Proteomes" id="UP000001951">
    <property type="component" value="Chromosome"/>
</dbReference>
<dbReference type="GO" id="GO:0005737">
    <property type="term" value="C:cytoplasm"/>
    <property type="evidence" value="ECO:0007669"/>
    <property type="project" value="UniProtKB-ARBA"/>
</dbReference>
<dbReference type="GO" id="GO:0051537">
    <property type="term" value="F:2 iron, 2 sulfur cluster binding"/>
    <property type="evidence" value="ECO:0007669"/>
    <property type="project" value="TreeGrafter"/>
</dbReference>
<dbReference type="GO" id="GO:0008199">
    <property type="term" value="F:ferric iron binding"/>
    <property type="evidence" value="ECO:0007669"/>
    <property type="project" value="InterPro"/>
</dbReference>
<dbReference type="GO" id="GO:0008198">
    <property type="term" value="F:ferrous iron binding"/>
    <property type="evidence" value="ECO:0007669"/>
    <property type="project" value="TreeGrafter"/>
</dbReference>
<dbReference type="GO" id="GO:0004322">
    <property type="term" value="F:ferroxidase activity"/>
    <property type="evidence" value="ECO:0007669"/>
    <property type="project" value="TreeGrafter"/>
</dbReference>
<dbReference type="GO" id="GO:0034986">
    <property type="term" value="F:iron chaperone activity"/>
    <property type="evidence" value="ECO:0007669"/>
    <property type="project" value="TreeGrafter"/>
</dbReference>
<dbReference type="GO" id="GO:0006879">
    <property type="term" value="P:intracellular iron ion homeostasis"/>
    <property type="evidence" value="ECO:0007669"/>
    <property type="project" value="TreeGrafter"/>
</dbReference>
<dbReference type="GO" id="GO:0016226">
    <property type="term" value="P:iron-sulfur cluster assembly"/>
    <property type="evidence" value="ECO:0007669"/>
    <property type="project" value="UniProtKB-UniRule"/>
</dbReference>
<dbReference type="Gene3D" id="3.30.920.10">
    <property type="entry name" value="Frataxin/CyaY"/>
    <property type="match status" value="1"/>
</dbReference>
<dbReference type="HAMAP" id="MF_00142">
    <property type="entry name" value="CyaY"/>
    <property type="match status" value="1"/>
</dbReference>
<dbReference type="InterPro" id="IPR047584">
    <property type="entry name" value="CyaY"/>
</dbReference>
<dbReference type="InterPro" id="IPR002908">
    <property type="entry name" value="Frataxin/CyaY"/>
</dbReference>
<dbReference type="InterPro" id="IPR036524">
    <property type="entry name" value="Frataxin/CyaY_sf"/>
</dbReference>
<dbReference type="InterPro" id="IPR020895">
    <property type="entry name" value="Frataxin_CS"/>
</dbReference>
<dbReference type="NCBIfam" id="TIGR03421">
    <property type="entry name" value="FeS_CyaY"/>
    <property type="match status" value="1"/>
</dbReference>
<dbReference type="PANTHER" id="PTHR16821">
    <property type="entry name" value="FRATAXIN"/>
    <property type="match status" value="1"/>
</dbReference>
<dbReference type="PANTHER" id="PTHR16821:SF2">
    <property type="entry name" value="FRATAXIN, MITOCHONDRIAL"/>
    <property type="match status" value="1"/>
</dbReference>
<dbReference type="Pfam" id="PF01491">
    <property type="entry name" value="Frataxin_Cyay"/>
    <property type="match status" value="1"/>
</dbReference>
<dbReference type="SMART" id="SM01219">
    <property type="entry name" value="Frataxin_Cyay"/>
    <property type="match status" value="1"/>
</dbReference>
<dbReference type="SUPFAM" id="SSF55387">
    <property type="entry name" value="Frataxin/Nqo15-like"/>
    <property type="match status" value="1"/>
</dbReference>
<dbReference type="PROSITE" id="PS01344">
    <property type="entry name" value="FRATAXIN_1"/>
    <property type="match status" value="1"/>
</dbReference>
<dbReference type="PROSITE" id="PS50810">
    <property type="entry name" value="FRATAXIN_2"/>
    <property type="match status" value="1"/>
</dbReference>
<comment type="function">
    <text evidence="1">Involved in iron-sulfur (Fe-S) cluster assembly. May act as a regulator of Fe-S biogenesis.</text>
</comment>
<comment type="similarity">
    <text evidence="1">Belongs to the frataxin family.</text>
</comment>
<gene>
    <name evidence="1" type="primary">cyaY</name>
    <name type="ordered locus">RBE_0809</name>
</gene>
<evidence type="ECO:0000255" key="1">
    <source>
        <dbReference type="HAMAP-Rule" id="MF_00142"/>
    </source>
</evidence>
<reference key="1">
    <citation type="journal article" date="2006" name="PLoS Genet.">
        <title>Genome sequence of Rickettsia bellii illuminates the role of amoebae in gene exchanges between intracellular pathogens.</title>
        <authorList>
            <person name="Ogata H."/>
            <person name="La Scola B."/>
            <person name="Audic S."/>
            <person name="Renesto P."/>
            <person name="Blanc G."/>
            <person name="Robert C."/>
            <person name="Fournier P.-E."/>
            <person name="Claverie J.-M."/>
            <person name="Raoult D."/>
        </authorList>
    </citation>
    <scope>NUCLEOTIDE SEQUENCE [LARGE SCALE GENOMIC DNA]</scope>
    <source>
        <strain>RML369-C</strain>
    </source>
</reference>